<name>HFLD_SALPB</name>
<gene>
    <name evidence="1" type="primary">hflD</name>
    <name type="ordered locus">SPAB_02281</name>
</gene>
<evidence type="ECO:0000255" key="1">
    <source>
        <dbReference type="HAMAP-Rule" id="MF_00695"/>
    </source>
</evidence>
<keyword id="KW-0997">Cell inner membrane</keyword>
<keyword id="KW-1003">Cell membrane</keyword>
<keyword id="KW-0175">Coiled coil</keyword>
<keyword id="KW-0963">Cytoplasm</keyword>
<keyword id="KW-0472">Membrane</keyword>
<reference key="1">
    <citation type="submission" date="2007-11" db="EMBL/GenBank/DDBJ databases">
        <authorList>
            <consortium name="The Salmonella enterica serovar Paratyphi B Genome Sequencing Project"/>
            <person name="McClelland M."/>
            <person name="Sanderson E.K."/>
            <person name="Porwollik S."/>
            <person name="Spieth J."/>
            <person name="Clifton W.S."/>
            <person name="Fulton R."/>
            <person name="Cordes M."/>
            <person name="Wollam A."/>
            <person name="Shah N."/>
            <person name="Pepin K."/>
            <person name="Bhonagiri V."/>
            <person name="Nash W."/>
            <person name="Johnson M."/>
            <person name="Thiruvilangam P."/>
            <person name="Wilson R."/>
        </authorList>
    </citation>
    <scope>NUCLEOTIDE SEQUENCE [LARGE SCALE GENOMIC DNA]</scope>
    <source>
        <strain>ATCC BAA-1250 / SPB7</strain>
    </source>
</reference>
<accession>A9N4K9</accession>
<protein>
    <recommendedName>
        <fullName evidence="1">High frequency lysogenization protein HflD homolog</fullName>
    </recommendedName>
</protein>
<sequence length="213" mass="22916">MAKNYYDITLALSGICQSARLVQQLAHQGHCDADALHVSLNSVIDMNPSSTLGVFGGSEANLRLGLETLLGVLNASSRQGLNAELTRYTLSLMVLERKLSSAKGALNTLGDRINGLQRQLDHFDLQSDTLMSAMAGIYVDVISPLGPRIQVTGSPAVLQSPQVQAKVRASLLAGIRAAVLWHQVGGGRLQLMFSRHRLTTQAKQILAHLTPEL</sequence>
<comment type="subcellular location">
    <subcellularLocation>
        <location>Cytoplasm</location>
    </subcellularLocation>
    <subcellularLocation>
        <location evidence="1">Cell inner membrane</location>
        <topology evidence="1">Peripheral membrane protein</topology>
        <orientation evidence="1">Cytoplasmic side</orientation>
    </subcellularLocation>
</comment>
<comment type="similarity">
    <text evidence="1">Belongs to the HflD family.</text>
</comment>
<dbReference type="EMBL" id="CP000886">
    <property type="protein sequence ID" value="ABX67664.1"/>
    <property type="molecule type" value="Genomic_DNA"/>
</dbReference>
<dbReference type="RefSeq" id="WP_001519653.1">
    <property type="nucleotide sequence ID" value="NC_010102.1"/>
</dbReference>
<dbReference type="SMR" id="A9N4K9"/>
<dbReference type="KEGG" id="spq:SPAB_02281"/>
<dbReference type="PATRIC" id="fig|1016998.12.peg.2158"/>
<dbReference type="HOGENOM" id="CLU_098920_0_0_6"/>
<dbReference type="Proteomes" id="UP000008556">
    <property type="component" value="Chromosome"/>
</dbReference>
<dbReference type="GO" id="GO:0005737">
    <property type="term" value="C:cytoplasm"/>
    <property type="evidence" value="ECO:0007669"/>
    <property type="project" value="UniProtKB-SubCell"/>
</dbReference>
<dbReference type="GO" id="GO:0005886">
    <property type="term" value="C:plasma membrane"/>
    <property type="evidence" value="ECO:0007669"/>
    <property type="project" value="UniProtKB-SubCell"/>
</dbReference>
<dbReference type="FunFam" id="1.10.3890.10:FF:000001">
    <property type="entry name" value="High frequency lysogenization protein HflD homolog"/>
    <property type="match status" value="1"/>
</dbReference>
<dbReference type="Gene3D" id="1.10.3890.10">
    <property type="entry name" value="HflD-like"/>
    <property type="match status" value="1"/>
</dbReference>
<dbReference type="HAMAP" id="MF_00695">
    <property type="entry name" value="HflD_protein"/>
    <property type="match status" value="1"/>
</dbReference>
<dbReference type="InterPro" id="IPR007451">
    <property type="entry name" value="HflD"/>
</dbReference>
<dbReference type="InterPro" id="IPR035932">
    <property type="entry name" value="HflD-like_sf"/>
</dbReference>
<dbReference type="NCBIfam" id="NF001245">
    <property type="entry name" value="PRK00218.1-1"/>
    <property type="match status" value="1"/>
</dbReference>
<dbReference type="NCBIfam" id="NF001246">
    <property type="entry name" value="PRK00218.1-2"/>
    <property type="match status" value="1"/>
</dbReference>
<dbReference type="NCBIfam" id="NF001248">
    <property type="entry name" value="PRK00218.1-4"/>
    <property type="match status" value="1"/>
</dbReference>
<dbReference type="NCBIfam" id="NF001249">
    <property type="entry name" value="PRK00218.1-5"/>
    <property type="match status" value="1"/>
</dbReference>
<dbReference type="PANTHER" id="PTHR38100">
    <property type="entry name" value="HIGH FREQUENCY LYSOGENIZATION PROTEIN HFLD"/>
    <property type="match status" value="1"/>
</dbReference>
<dbReference type="PANTHER" id="PTHR38100:SF1">
    <property type="entry name" value="HIGH FREQUENCY LYSOGENIZATION PROTEIN HFLD"/>
    <property type="match status" value="1"/>
</dbReference>
<dbReference type="Pfam" id="PF04356">
    <property type="entry name" value="DUF489"/>
    <property type="match status" value="1"/>
</dbReference>
<dbReference type="SUPFAM" id="SSF101322">
    <property type="entry name" value="YcfC-like"/>
    <property type="match status" value="1"/>
</dbReference>
<feature type="chain" id="PRO_1000083179" description="High frequency lysogenization protein HflD homolog">
    <location>
        <begin position="1"/>
        <end position="213"/>
    </location>
</feature>
<feature type="coiled-coil region" evidence="1">
    <location>
        <begin position="79"/>
        <end position="122"/>
    </location>
</feature>
<organism>
    <name type="scientific">Salmonella paratyphi B (strain ATCC BAA-1250 / SPB7)</name>
    <dbReference type="NCBI Taxonomy" id="1016998"/>
    <lineage>
        <taxon>Bacteria</taxon>
        <taxon>Pseudomonadati</taxon>
        <taxon>Pseudomonadota</taxon>
        <taxon>Gammaproteobacteria</taxon>
        <taxon>Enterobacterales</taxon>
        <taxon>Enterobacteriaceae</taxon>
        <taxon>Salmonella</taxon>
    </lineage>
</organism>
<proteinExistence type="inferred from homology"/>